<sequence length="63" mass="7329">MPKSRTCSFCGGSIEPGTGLMYVLRNGQILWFCSSKCYKNFVKLRRKPDKLEWVRKVKKSLLD</sequence>
<feature type="chain" id="PRO_0000136911" description="Large ribosomal subunit protein eL24">
    <location>
        <begin position="1"/>
        <end position="63"/>
    </location>
</feature>
<feature type="zinc finger region" description="C4-type" evidence="1">
    <location>
        <begin position="7"/>
        <end position="37"/>
    </location>
</feature>
<feature type="binding site" evidence="1">
    <location>
        <position position="7"/>
    </location>
    <ligand>
        <name>Zn(2+)</name>
        <dbReference type="ChEBI" id="CHEBI:29105"/>
    </ligand>
</feature>
<feature type="binding site" evidence="1">
    <location>
        <position position="10"/>
    </location>
    <ligand>
        <name>Zn(2+)</name>
        <dbReference type="ChEBI" id="CHEBI:29105"/>
    </ligand>
</feature>
<feature type="binding site" evidence="1">
    <location>
        <position position="33"/>
    </location>
    <ligand>
        <name>Zn(2+)</name>
        <dbReference type="ChEBI" id="CHEBI:29105"/>
    </ligand>
</feature>
<feature type="binding site" evidence="1">
    <location>
        <position position="37"/>
    </location>
    <ligand>
        <name>Zn(2+)</name>
        <dbReference type="ChEBI" id="CHEBI:29105"/>
    </ligand>
</feature>
<keyword id="KW-0479">Metal-binding</keyword>
<keyword id="KW-1185">Reference proteome</keyword>
<keyword id="KW-0687">Ribonucleoprotein</keyword>
<keyword id="KW-0689">Ribosomal protein</keyword>
<keyword id="KW-0694">RNA-binding</keyword>
<keyword id="KW-0699">rRNA-binding</keyword>
<keyword id="KW-0862">Zinc</keyword>
<keyword id="KW-0863">Zinc-finger</keyword>
<gene>
    <name evidence="1" type="primary">rpl24e</name>
    <name type="ordered locus">APE_2379a</name>
    <name type="ORF">APES070</name>
</gene>
<evidence type="ECO:0000255" key="1">
    <source>
        <dbReference type="HAMAP-Rule" id="MF_00773"/>
    </source>
</evidence>
<evidence type="ECO:0000305" key="2"/>
<organism>
    <name type="scientific">Aeropyrum pernix (strain ATCC 700893 / DSM 11879 / JCM 9820 / NBRC 100138 / K1)</name>
    <dbReference type="NCBI Taxonomy" id="272557"/>
    <lineage>
        <taxon>Archaea</taxon>
        <taxon>Thermoproteota</taxon>
        <taxon>Thermoprotei</taxon>
        <taxon>Desulfurococcales</taxon>
        <taxon>Desulfurococcaceae</taxon>
        <taxon>Aeropyrum</taxon>
    </lineage>
</organism>
<name>RL24E_AERPE</name>
<reference key="1">
    <citation type="journal article" date="1999" name="DNA Res.">
        <title>Complete genome sequence of an aerobic hyper-thermophilic crenarchaeon, Aeropyrum pernix K1.</title>
        <authorList>
            <person name="Kawarabayasi Y."/>
            <person name="Hino Y."/>
            <person name="Horikawa H."/>
            <person name="Yamazaki S."/>
            <person name="Haikawa Y."/>
            <person name="Jin-no K."/>
            <person name="Takahashi M."/>
            <person name="Sekine M."/>
            <person name="Baba S."/>
            <person name="Ankai A."/>
            <person name="Kosugi H."/>
            <person name="Hosoyama A."/>
            <person name="Fukui S."/>
            <person name="Nagai Y."/>
            <person name="Nishijima K."/>
            <person name="Nakazawa H."/>
            <person name="Takamiya M."/>
            <person name="Masuda S."/>
            <person name="Funahashi T."/>
            <person name="Tanaka T."/>
            <person name="Kudoh Y."/>
            <person name="Yamazaki J."/>
            <person name="Kushida N."/>
            <person name="Oguchi A."/>
            <person name="Aoki K."/>
            <person name="Kubota K."/>
            <person name="Nakamura Y."/>
            <person name="Nomura N."/>
            <person name="Sako Y."/>
            <person name="Kikuchi H."/>
        </authorList>
    </citation>
    <scope>NUCLEOTIDE SEQUENCE [LARGE SCALE GENOMIC DNA]</scope>
    <source>
        <strain>ATCC 700893 / DSM 11879 / JCM 9820 / NBRC 100138 / K1</strain>
    </source>
</reference>
<proteinExistence type="inferred from homology"/>
<protein>
    <recommendedName>
        <fullName evidence="1">Large ribosomal subunit protein eL24</fullName>
    </recommendedName>
    <alternativeName>
        <fullName evidence="2">50S ribosomal protein L24e</fullName>
    </alternativeName>
</protein>
<accession>Q9Y9A7</accession>
<comment type="function">
    <text evidence="1">Binds to the 23S rRNA.</text>
</comment>
<comment type="cofactor">
    <cofactor evidence="1">
        <name>Zn(2+)</name>
        <dbReference type="ChEBI" id="CHEBI:29105"/>
    </cofactor>
    <text evidence="1">Binds 1 zinc ion per subunit.</text>
</comment>
<comment type="subunit">
    <text evidence="1">Part of the 50S ribosomal subunit. Forms a cluster with proteins L3 and L14.</text>
</comment>
<comment type="similarity">
    <text evidence="1">Belongs to the eukaryotic ribosomal protein eL24 family.</text>
</comment>
<dbReference type="EMBL" id="BA000002">
    <property type="protein sequence ID" value="BAA81393.1"/>
    <property type="molecule type" value="Genomic_DNA"/>
</dbReference>
<dbReference type="PIR" id="A72467">
    <property type="entry name" value="A72467"/>
</dbReference>
<dbReference type="RefSeq" id="WP_010866973.1">
    <property type="nucleotide sequence ID" value="NC_000854.2"/>
</dbReference>
<dbReference type="SMR" id="Q9Y9A7"/>
<dbReference type="STRING" id="272557.APE_2379a"/>
<dbReference type="EnsemblBacteria" id="BAA81393">
    <property type="protein sequence ID" value="BAA81393"/>
    <property type="gene ID" value="APE_2379a"/>
</dbReference>
<dbReference type="GeneID" id="1445383"/>
<dbReference type="KEGG" id="ape:APE_2379a"/>
<dbReference type="PATRIC" id="fig|272557.25.peg.1587"/>
<dbReference type="eggNOG" id="arCOG01950">
    <property type="taxonomic scope" value="Archaea"/>
</dbReference>
<dbReference type="Proteomes" id="UP000002518">
    <property type="component" value="Chromosome"/>
</dbReference>
<dbReference type="GO" id="GO:1990904">
    <property type="term" value="C:ribonucleoprotein complex"/>
    <property type="evidence" value="ECO:0007669"/>
    <property type="project" value="UniProtKB-KW"/>
</dbReference>
<dbReference type="GO" id="GO:0005840">
    <property type="term" value="C:ribosome"/>
    <property type="evidence" value="ECO:0007669"/>
    <property type="project" value="UniProtKB-KW"/>
</dbReference>
<dbReference type="GO" id="GO:0019843">
    <property type="term" value="F:rRNA binding"/>
    <property type="evidence" value="ECO:0007669"/>
    <property type="project" value="UniProtKB-UniRule"/>
</dbReference>
<dbReference type="GO" id="GO:0003735">
    <property type="term" value="F:structural constituent of ribosome"/>
    <property type="evidence" value="ECO:0007669"/>
    <property type="project" value="InterPro"/>
</dbReference>
<dbReference type="GO" id="GO:0008270">
    <property type="term" value="F:zinc ion binding"/>
    <property type="evidence" value="ECO:0007669"/>
    <property type="project" value="UniProtKB-UniRule"/>
</dbReference>
<dbReference type="GO" id="GO:0006412">
    <property type="term" value="P:translation"/>
    <property type="evidence" value="ECO:0007669"/>
    <property type="project" value="UniProtKB-UniRule"/>
</dbReference>
<dbReference type="CDD" id="cd00472">
    <property type="entry name" value="Ribosomal_L24e_L24"/>
    <property type="match status" value="1"/>
</dbReference>
<dbReference type="Gene3D" id="2.30.170.20">
    <property type="entry name" value="Ribosomal protein L24e"/>
    <property type="match status" value="1"/>
</dbReference>
<dbReference type="HAMAP" id="MF_00773">
    <property type="entry name" value="Ribosomal_eL24"/>
    <property type="match status" value="1"/>
</dbReference>
<dbReference type="InterPro" id="IPR038630">
    <property type="entry name" value="L24e/L24_sf"/>
</dbReference>
<dbReference type="InterPro" id="IPR056366">
    <property type="entry name" value="Ribosomal_eL24"/>
</dbReference>
<dbReference type="InterPro" id="IPR055345">
    <property type="entry name" value="Ribosomal_eL24-rel_arc"/>
</dbReference>
<dbReference type="InterPro" id="IPR000988">
    <property type="entry name" value="Ribosomal_eL24-rel_N"/>
</dbReference>
<dbReference type="InterPro" id="IPR011017">
    <property type="entry name" value="TRASH_dom"/>
</dbReference>
<dbReference type="NCBIfam" id="NF034186">
    <property type="entry name" value="PRK14891.1-1"/>
    <property type="match status" value="1"/>
</dbReference>
<dbReference type="PANTHER" id="PTHR10792">
    <property type="entry name" value="60S RIBOSOMAL PROTEIN L24"/>
    <property type="match status" value="1"/>
</dbReference>
<dbReference type="PANTHER" id="PTHR10792:SF1">
    <property type="entry name" value="RIBOSOMAL PROTEIN L24"/>
    <property type="match status" value="1"/>
</dbReference>
<dbReference type="Pfam" id="PF01246">
    <property type="entry name" value="Ribosomal_L24e"/>
    <property type="match status" value="1"/>
</dbReference>
<dbReference type="SMART" id="SM00746">
    <property type="entry name" value="TRASH"/>
    <property type="match status" value="1"/>
</dbReference>
<dbReference type="SUPFAM" id="SSF57716">
    <property type="entry name" value="Glucocorticoid receptor-like (DNA-binding domain)"/>
    <property type="match status" value="1"/>
</dbReference>